<keyword id="KW-0963">Cytoplasm</keyword>
<keyword id="KW-0570">Pentose shunt</keyword>
<keyword id="KW-0704">Schiff base</keyword>
<keyword id="KW-0808">Transferase</keyword>
<dbReference type="EC" id="2.2.1.2" evidence="2"/>
<dbReference type="EMBL" id="CP000436">
    <property type="protein sequence ID" value="ABI24482.1"/>
    <property type="molecule type" value="Genomic_DNA"/>
</dbReference>
<dbReference type="SMR" id="Q0I1U0"/>
<dbReference type="KEGG" id="hso:HS_0204"/>
<dbReference type="eggNOG" id="COG0176">
    <property type="taxonomic scope" value="Bacteria"/>
</dbReference>
<dbReference type="HOGENOM" id="CLU_047470_0_1_6"/>
<dbReference type="UniPathway" id="UPA00115">
    <property type="reaction ID" value="UER00414"/>
</dbReference>
<dbReference type="GO" id="GO:0005829">
    <property type="term" value="C:cytosol"/>
    <property type="evidence" value="ECO:0007669"/>
    <property type="project" value="TreeGrafter"/>
</dbReference>
<dbReference type="GO" id="GO:0004801">
    <property type="term" value="F:transaldolase activity"/>
    <property type="evidence" value="ECO:0000250"/>
    <property type="project" value="UniProtKB"/>
</dbReference>
<dbReference type="GO" id="GO:0005975">
    <property type="term" value="P:carbohydrate metabolic process"/>
    <property type="evidence" value="ECO:0007669"/>
    <property type="project" value="InterPro"/>
</dbReference>
<dbReference type="GO" id="GO:0006098">
    <property type="term" value="P:pentose-phosphate shunt"/>
    <property type="evidence" value="ECO:0007669"/>
    <property type="project" value="UniProtKB-UniRule"/>
</dbReference>
<dbReference type="CDD" id="cd00957">
    <property type="entry name" value="Transaldolase_TalAB"/>
    <property type="match status" value="1"/>
</dbReference>
<dbReference type="FunFam" id="3.20.20.70:FF:000002">
    <property type="entry name" value="Transaldolase"/>
    <property type="match status" value="1"/>
</dbReference>
<dbReference type="Gene3D" id="3.20.20.70">
    <property type="entry name" value="Aldolase class I"/>
    <property type="match status" value="1"/>
</dbReference>
<dbReference type="HAMAP" id="MF_00492">
    <property type="entry name" value="Transaldolase_1"/>
    <property type="match status" value="1"/>
</dbReference>
<dbReference type="InterPro" id="IPR013785">
    <property type="entry name" value="Aldolase_TIM"/>
</dbReference>
<dbReference type="InterPro" id="IPR001585">
    <property type="entry name" value="TAL/FSA"/>
</dbReference>
<dbReference type="InterPro" id="IPR004730">
    <property type="entry name" value="Transaldolase_1"/>
</dbReference>
<dbReference type="InterPro" id="IPR018225">
    <property type="entry name" value="Transaldolase_AS"/>
</dbReference>
<dbReference type="NCBIfam" id="NF009001">
    <property type="entry name" value="PRK12346.1"/>
    <property type="match status" value="1"/>
</dbReference>
<dbReference type="NCBIfam" id="TIGR00874">
    <property type="entry name" value="talAB"/>
    <property type="match status" value="1"/>
</dbReference>
<dbReference type="PANTHER" id="PTHR10683">
    <property type="entry name" value="TRANSALDOLASE"/>
    <property type="match status" value="1"/>
</dbReference>
<dbReference type="PANTHER" id="PTHR10683:SF18">
    <property type="entry name" value="TRANSALDOLASE"/>
    <property type="match status" value="1"/>
</dbReference>
<dbReference type="Pfam" id="PF00923">
    <property type="entry name" value="TAL_FSA"/>
    <property type="match status" value="1"/>
</dbReference>
<dbReference type="SUPFAM" id="SSF51569">
    <property type="entry name" value="Aldolase"/>
    <property type="match status" value="1"/>
</dbReference>
<dbReference type="PROSITE" id="PS01054">
    <property type="entry name" value="TRANSALDOLASE_1"/>
    <property type="match status" value="1"/>
</dbReference>
<dbReference type="PROSITE" id="PS00958">
    <property type="entry name" value="TRANSALDOLASE_2"/>
    <property type="match status" value="1"/>
</dbReference>
<name>TAL_HISS1</name>
<protein>
    <recommendedName>
        <fullName evidence="2">Transaldolase</fullName>
        <ecNumber evidence="2">2.2.1.2</ecNumber>
    </recommendedName>
</protein>
<sequence>MTTQLDALRNMTVVVADTGDIDAIKKYQPQDATTNPSLILSASSLPQYAPLIDEAIAYAKAKSADKTQQLIDAEDKLAVNIGLEILKIVPGRISTEVDARLSYDTQATVEKARKLIALYNEAGISNDRILIKIASTWQGIRAAEILEKEGINCNLTLLFSEAQARACAEAGVYLISPFVGRILDWYKANSDKKEYAPAEDPGVISVTKIYNYYKQYGYNTVVMGASFRNVGEITELAGCDRLTIAPALLKELQENSTALVRKLEFKGEVQAKPQPLTESQFYWQHNSDPMAVEKLADGIRKFAIDQEKLEKMLLEKF</sequence>
<reference key="1">
    <citation type="journal article" date="2007" name="J. Bacteriol.">
        <title>Complete genome sequence of Haemophilus somnus (Histophilus somni) strain 129Pt and comparison to Haemophilus ducreyi 35000HP and Haemophilus influenzae Rd.</title>
        <authorList>
            <person name="Challacombe J.F."/>
            <person name="Duncan A.J."/>
            <person name="Brettin T.S."/>
            <person name="Bruce D."/>
            <person name="Chertkov O."/>
            <person name="Detter J.C."/>
            <person name="Han C.S."/>
            <person name="Misra M."/>
            <person name="Richardson P."/>
            <person name="Tapia R."/>
            <person name="Thayer N."/>
            <person name="Xie G."/>
            <person name="Inzana T.J."/>
        </authorList>
    </citation>
    <scope>NUCLEOTIDE SEQUENCE [LARGE SCALE GENOMIC DNA]</scope>
    <source>
        <strain>129Pt</strain>
    </source>
</reference>
<feature type="chain" id="PRO_1000014501" description="Transaldolase">
    <location>
        <begin position="1"/>
        <end position="317"/>
    </location>
</feature>
<feature type="active site" description="Schiff-base intermediate with substrate" evidence="2">
    <location>
        <position position="132"/>
    </location>
</feature>
<organism>
    <name type="scientific">Histophilus somni (strain 129Pt)</name>
    <name type="common">Haemophilus somnus</name>
    <dbReference type="NCBI Taxonomy" id="205914"/>
    <lineage>
        <taxon>Bacteria</taxon>
        <taxon>Pseudomonadati</taxon>
        <taxon>Pseudomonadota</taxon>
        <taxon>Gammaproteobacteria</taxon>
        <taxon>Pasteurellales</taxon>
        <taxon>Pasteurellaceae</taxon>
        <taxon>Histophilus</taxon>
    </lineage>
</organism>
<comment type="function">
    <text evidence="2">Transaldolase is important for the balance of metabolites in the pentose-phosphate pathway.</text>
</comment>
<comment type="catalytic activity">
    <reaction evidence="2">
        <text>D-sedoheptulose 7-phosphate + D-glyceraldehyde 3-phosphate = D-erythrose 4-phosphate + beta-D-fructose 6-phosphate</text>
        <dbReference type="Rhea" id="RHEA:17053"/>
        <dbReference type="ChEBI" id="CHEBI:16897"/>
        <dbReference type="ChEBI" id="CHEBI:57483"/>
        <dbReference type="ChEBI" id="CHEBI:57634"/>
        <dbReference type="ChEBI" id="CHEBI:59776"/>
        <dbReference type="EC" id="2.2.1.2"/>
    </reaction>
</comment>
<comment type="pathway">
    <text evidence="2">Carbohydrate degradation; pentose phosphate pathway; D-glyceraldehyde 3-phosphate and beta-D-fructose 6-phosphate from D-ribose 5-phosphate and D-xylulose 5-phosphate (non-oxidative stage): step 2/3.</text>
</comment>
<comment type="subunit">
    <text evidence="1">Homodimer.</text>
</comment>
<comment type="subcellular location">
    <subcellularLocation>
        <location evidence="2">Cytoplasm</location>
    </subcellularLocation>
</comment>
<comment type="similarity">
    <text evidence="2">Belongs to the transaldolase family. Type 1 subfamily.</text>
</comment>
<accession>Q0I1U0</accession>
<proteinExistence type="inferred from homology"/>
<evidence type="ECO:0000250" key="1"/>
<evidence type="ECO:0000255" key="2">
    <source>
        <dbReference type="HAMAP-Rule" id="MF_00492"/>
    </source>
</evidence>
<gene>
    <name evidence="2" type="primary">tal</name>
    <name type="ordered locus">HS_0204</name>
</gene>